<evidence type="ECO:0000255" key="1">
    <source>
        <dbReference type="HAMAP-Rule" id="MF_01326"/>
    </source>
</evidence>
<evidence type="ECO:0000305" key="2"/>
<keyword id="KW-0687">Ribonucleoprotein</keyword>
<keyword id="KW-0689">Ribosomal protein</keyword>
<keyword id="KW-0694">RNA-binding</keyword>
<keyword id="KW-0699">rRNA-binding</keyword>
<protein>
    <recommendedName>
        <fullName evidence="1">Large ribosomal subunit protein uL24</fullName>
    </recommendedName>
    <alternativeName>
        <fullName evidence="2">50S ribosomal protein L24</fullName>
    </alternativeName>
</protein>
<dbReference type="EMBL" id="CP001107">
    <property type="protein sequence ID" value="ACR74220.1"/>
    <property type="molecule type" value="Genomic_DNA"/>
</dbReference>
<dbReference type="RefSeq" id="WP_012741337.1">
    <property type="nucleotide sequence ID" value="NZ_CAXSYD010000003.1"/>
</dbReference>
<dbReference type="SMR" id="C4ZBT0"/>
<dbReference type="STRING" id="515619.EUBREC_0429"/>
<dbReference type="PaxDb" id="515619-EUBREC_0429"/>
<dbReference type="GeneID" id="86987339"/>
<dbReference type="KEGG" id="ere:EUBREC_0429"/>
<dbReference type="HOGENOM" id="CLU_093315_2_0_9"/>
<dbReference type="Proteomes" id="UP000001477">
    <property type="component" value="Chromosome"/>
</dbReference>
<dbReference type="GO" id="GO:1990904">
    <property type="term" value="C:ribonucleoprotein complex"/>
    <property type="evidence" value="ECO:0007669"/>
    <property type="project" value="UniProtKB-KW"/>
</dbReference>
<dbReference type="GO" id="GO:0005840">
    <property type="term" value="C:ribosome"/>
    <property type="evidence" value="ECO:0007669"/>
    <property type="project" value="UniProtKB-KW"/>
</dbReference>
<dbReference type="GO" id="GO:0019843">
    <property type="term" value="F:rRNA binding"/>
    <property type="evidence" value="ECO:0007669"/>
    <property type="project" value="UniProtKB-UniRule"/>
</dbReference>
<dbReference type="GO" id="GO:0003735">
    <property type="term" value="F:structural constituent of ribosome"/>
    <property type="evidence" value="ECO:0007669"/>
    <property type="project" value="InterPro"/>
</dbReference>
<dbReference type="GO" id="GO:0006412">
    <property type="term" value="P:translation"/>
    <property type="evidence" value="ECO:0007669"/>
    <property type="project" value="UniProtKB-UniRule"/>
</dbReference>
<dbReference type="CDD" id="cd06089">
    <property type="entry name" value="KOW_RPL26"/>
    <property type="match status" value="1"/>
</dbReference>
<dbReference type="FunFam" id="2.30.30.30:FF:000004">
    <property type="entry name" value="50S ribosomal protein L24"/>
    <property type="match status" value="1"/>
</dbReference>
<dbReference type="Gene3D" id="2.30.30.30">
    <property type="match status" value="1"/>
</dbReference>
<dbReference type="HAMAP" id="MF_01326_B">
    <property type="entry name" value="Ribosomal_uL24_B"/>
    <property type="match status" value="1"/>
</dbReference>
<dbReference type="InterPro" id="IPR005824">
    <property type="entry name" value="KOW"/>
</dbReference>
<dbReference type="InterPro" id="IPR014722">
    <property type="entry name" value="Rib_uL2_dom2"/>
</dbReference>
<dbReference type="InterPro" id="IPR003256">
    <property type="entry name" value="Ribosomal_uL24"/>
</dbReference>
<dbReference type="InterPro" id="IPR041988">
    <property type="entry name" value="Ribosomal_uL24_KOW"/>
</dbReference>
<dbReference type="InterPro" id="IPR008991">
    <property type="entry name" value="Translation_prot_SH3-like_sf"/>
</dbReference>
<dbReference type="NCBIfam" id="TIGR01079">
    <property type="entry name" value="rplX_bact"/>
    <property type="match status" value="1"/>
</dbReference>
<dbReference type="PANTHER" id="PTHR12903">
    <property type="entry name" value="MITOCHONDRIAL RIBOSOMAL PROTEIN L24"/>
    <property type="match status" value="1"/>
</dbReference>
<dbReference type="Pfam" id="PF00467">
    <property type="entry name" value="KOW"/>
    <property type="match status" value="1"/>
</dbReference>
<dbReference type="Pfam" id="PF17136">
    <property type="entry name" value="ribosomal_L24"/>
    <property type="match status" value="1"/>
</dbReference>
<dbReference type="SMART" id="SM00739">
    <property type="entry name" value="KOW"/>
    <property type="match status" value="1"/>
</dbReference>
<dbReference type="SUPFAM" id="SSF50104">
    <property type="entry name" value="Translation proteins SH3-like domain"/>
    <property type="match status" value="1"/>
</dbReference>
<gene>
    <name evidence="1" type="primary">rplX</name>
    <name type="ordered locus">EUBREC_0429</name>
</gene>
<name>RL24_AGARV</name>
<accession>C4ZBT0</accession>
<proteinExistence type="inferred from homology"/>
<comment type="function">
    <text evidence="1">One of two assembly initiator proteins, it binds directly to the 5'-end of the 23S rRNA, where it nucleates assembly of the 50S subunit.</text>
</comment>
<comment type="function">
    <text evidence="1">One of the proteins that surrounds the polypeptide exit tunnel on the outside of the subunit.</text>
</comment>
<comment type="subunit">
    <text evidence="1">Part of the 50S ribosomal subunit.</text>
</comment>
<comment type="similarity">
    <text evidence="1">Belongs to the universal ribosomal protein uL24 family.</text>
</comment>
<reference key="1">
    <citation type="journal article" date="2009" name="Proc. Natl. Acad. Sci. U.S.A.">
        <title>Characterizing a model human gut microbiota composed of members of its two dominant bacterial phyla.</title>
        <authorList>
            <person name="Mahowald M.A."/>
            <person name="Rey F.E."/>
            <person name="Seedorf H."/>
            <person name="Turnbaugh P.J."/>
            <person name="Fulton R.S."/>
            <person name="Wollam A."/>
            <person name="Shah N."/>
            <person name="Wang C."/>
            <person name="Magrini V."/>
            <person name="Wilson R.K."/>
            <person name="Cantarel B.L."/>
            <person name="Coutinho P.M."/>
            <person name="Henrissat B."/>
            <person name="Crock L.W."/>
            <person name="Russell A."/>
            <person name="Verberkmoes N.C."/>
            <person name="Hettich R.L."/>
            <person name="Gordon J.I."/>
        </authorList>
    </citation>
    <scope>NUCLEOTIDE SEQUENCE [LARGE SCALE GENOMIC DNA]</scope>
    <source>
        <strain>ATCC 33656 / DSM 3377 / JCM 17463 / KCTC 5835 / LMG 30912 / VPI 0990</strain>
    </source>
</reference>
<feature type="chain" id="PRO_1000214543" description="Large ribosomal subunit protein uL24">
    <location>
        <begin position="1"/>
        <end position="103"/>
    </location>
</feature>
<organism>
    <name type="scientific">Agathobacter rectalis (strain ATCC 33656 / DSM 3377 / JCM 17463 / KCTC 5835 / VPI 0990)</name>
    <name type="common">Eubacterium rectale</name>
    <dbReference type="NCBI Taxonomy" id="515619"/>
    <lineage>
        <taxon>Bacteria</taxon>
        <taxon>Bacillati</taxon>
        <taxon>Bacillota</taxon>
        <taxon>Clostridia</taxon>
        <taxon>Lachnospirales</taxon>
        <taxon>Lachnospiraceae</taxon>
        <taxon>Agathobacter</taxon>
    </lineage>
</organism>
<sequence>MATMKIKKGDLVKVIAGKDINNEGKVIAVNAKNNTLLVEGINMVTKHTKPSMSNQQGGIVHQEAPIDASNVMLIHDGKPTRVGFKMDGDKKVRFAKSTGKVID</sequence>